<reference key="1">
    <citation type="journal article" date="2006" name="Nat. Biotechnol.">
        <title>Complete genome sequence of the entomopathogenic and metabolically versatile soil bacterium Pseudomonas entomophila.</title>
        <authorList>
            <person name="Vodovar N."/>
            <person name="Vallenet D."/>
            <person name="Cruveiller S."/>
            <person name="Rouy Z."/>
            <person name="Barbe V."/>
            <person name="Acosta C."/>
            <person name="Cattolico L."/>
            <person name="Jubin C."/>
            <person name="Lajus A."/>
            <person name="Segurens B."/>
            <person name="Vacherie B."/>
            <person name="Wincker P."/>
            <person name="Weissenbach J."/>
            <person name="Lemaitre B."/>
            <person name="Medigue C."/>
            <person name="Boccard F."/>
        </authorList>
    </citation>
    <scope>NUCLEOTIDE SEQUENCE [LARGE SCALE GENOMIC DNA]</scope>
    <source>
        <strain>L48</strain>
    </source>
</reference>
<evidence type="ECO:0000255" key="1">
    <source>
        <dbReference type="HAMAP-Rule" id="MF_00297"/>
    </source>
</evidence>
<organism>
    <name type="scientific">Pseudomonas entomophila (strain L48)</name>
    <dbReference type="NCBI Taxonomy" id="384676"/>
    <lineage>
        <taxon>Bacteria</taxon>
        <taxon>Pseudomonadati</taxon>
        <taxon>Pseudomonadota</taxon>
        <taxon>Gammaproteobacteria</taxon>
        <taxon>Pseudomonadales</taxon>
        <taxon>Pseudomonadaceae</taxon>
        <taxon>Pseudomonas</taxon>
    </lineage>
</organism>
<accession>Q1IBF8</accession>
<sequence>MSARWTTAVLDPQTTGGWAVARSPEGFLVDANGALFPRDWLKRQELDVLCEHGIGHFDGQPVFLLELRTASEVQGCNWQGLRRFMLEGDFDTYKVLGYAAQIGTWAREHRFCGSCGQPMTQIHWERAMYCQPCDLRSYPRISPSMIVLITRGDEVLLARSPRFVTGVYSTLAGFAEPGESAEECLVREVREEVAIEVRNIQYVGSQCWPFPHSMMLGFHAEYAGGEIVMQPDEIEDAQWFSVHDLPPLPAGRSIARYLIDLYVARRLGLAEPVLPA</sequence>
<proteinExistence type="inferred from homology"/>
<dbReference type="EC" id="3.6.1.-" evidence="1"/>
<dbReference type="EC" id="3.6.1.22" evidence="1"/>
<dbReference type="EMBL" id="CT573326">
    <property type="protein sequence ID" value="CAK15007.1"/>
    <property type="molecule type" value="Genomic_DNA"/>
</dbReference>
<dbReference type="RefSeq" id="WP_011533410.1">
    <property type="nucleotide sequence ID" value="NC_008027.1"/>
</dbReference>
<dbReference type="SMR" id="Q1IBF8"/>
<dbReference type="STRING" id="384676.PSEEN2184"/>
<dbReference type="GeneID" id="32805385"/>
<dbReference type="KEGG" id="pen:PSEEN2184"/>
<dbReference type="eggNOG" id="COG2816">
    <property type="taxonomic scope" value="Bacteria"/>
</dbReference>
<dbReference type="HOGENOM" id="CLU_037162_0_1_6"/>
<dbReference type="OrthoDB" id="9791656at2"/>
<dbReference type="Proteomes" id="UP000000658">
    <property type="component" value="Chromosome"/>
</dbReference>
<dbReference type="GO" id="GO:0005829">
    <property type="term" value="C:cytosol"/>
    <property type="evidence" value="ECO:0007669"/>
    <property type="project" value="TreeGrafter"/>
</dbReference>
<dbReference type="GO" id="GO:0000287">
    <property type="term" value="F:magnesium ion binding"/>
    <property type="evidence" value="ECO:0007669"/>
    <property type="project" value="UniProtKB-UniRule"/>
</dbReference>
<dbReference type="GO" id="GO:0030145">
    <property type="term" value="F:manganese ion binding"/>
    <property type="evidence" value="ECO:0007669"/>
    <property type="project" value="UniProtKB-UniRule"/>
</dbReference>
<dbReference type="GO" id="GO:0000210">
    <property type="term" value="F:NAD+ diphosphatase activity"/>
    <property type="evidence" value="ECO:0007669"/>
    <property type="project" value="UniProtKB-UniRule"/>
</dbReference>
<dbReference type="GO" id="GO:0035529">
    <property type="term" value="F:NADH pyrophosphatase activity"/>
    <property type="evidence" value="ECO:0007669"/>
    <property type="project" value="TreeGrafter"/>
</dbReference>
<dbReference type="GO" id="GO:0110153">
    <property type="term" value="F:RNA NAD-cap (NMN-forming) hydrolase activity"/>
    <property type="evidence" value="ECO:0007669"/>
    <property type="project" value="RHEA"/>
</dbReference>
<dbReference type="GO" id="GO:0008270">
    <property type="term" value="F:zinc ion binding"/>
    <property type="evidence" value="ECO:0007669"/>
    <property type="project" value="UniProtKB-UniRule"/>
</dbReference>
<dbReference type="GO" id="GO:0019677">
    <property type="term" value="P:NAD catabolic process"/>
    <property type="evidence" value="ECO:0007669"/>
    <property type="project" value="TreeGrafter"/>
</dbReference>
<dbReference type="GO" id="GO:0006734">
    <property type="term" value="P:NADH metabolic process"/>
    <property type="evidence" value="ECO:0007669"/>
    <property type="project" value="TreeGrafter"/>
</dbReference>
<dbReference type="GO" id="GO:0006742">
    <property type="term" value="P:NADP catabolic process"/>
    <property type="evidence" value="ECO:0007669"/>
    <property type="project" value="TreeGrafter"/>
</dbReference>
<dbReference type="CDD" id="cd03429">
    <property type="entry name" value="NUDIX_NADH_pyrophosphatase_Nudt13"/>
    <property type="match status" value="1"/>
</dbReference>
<dbReference type="Gene3D" id="3.90.79.20">
    <property type="match status" value="1"/>
</dbReference>
<dbReference type="Gene3D" id="3.90.79.10">
    <property type="entry name" value="Nucleoside Triphosphate Pyrophosphohydrolase"/>
    <property type="match status" value="1"/>
</dbReference>
<dbReference type="HAMAP" id="MF_00297">
    <property type="entry name" value="Nudix_NudC"/>
    <property type="match status" value="1"/>
</dbReference>
<dbReference type="InterPro" id="IPR050241">
    <property type="entry name" value="NAD-cap_RNA_hydrolase_NudC"/>
</dbReference>
<dbReference type="InterPro" id="IPR015375">
    <property type="entry name" value="NADH_PPase-like_N"/>
</dbReference>
<dbReference type="InterPro" id="IPR049734">
    <property type="entry name" value="NudC-like_C"/>
</dbReference>
<dbReference type="InterPro" id="IPR015797">
    <property type="entry name" value="NUDIX_hydrolase-like_dom_sf"/>
</dbReference>
<dbReference type="InterPro" id="IPR000086">
    <property type="entry name" value="NUDIX_hydrolase_dom"/>
</dbReference>
<dbReference type="InterPro" id="IPR022925">
    <property type="entry name" value="RNA_Hydrolase_NudC"/>
</dbReference>
<dbReference type="InterPro" id="IPR015376">
    <property type="entry name" value="Znr_NADH_PPase"/>
</dbReference>
<dbReference type="NCBIfam" id="NF001299">
    <property type="entry name" value="PRK00241.1"/>
    <property type="match status" value="1"/>
</dbReference>
<dbReference type="PANTHER" id="PTHR42904:SF6">
    <property type="entry name" value="NAD-CAPPED RNA HYDROLASE NUDT12"/>
    <property type="match status" value="1"/>
</dbReference>
<dbReference type="PANTHER" id="PTHR42904">
    <property type="entry name" value="NUDIX HYDROLASE, NUDC SUBFAMILY"/>
    <property type="match status" value="1"/>
</dbReference>
<dbReference type="Pfam" id="PF00293">
    <property type="entry name" value="NUDIX"/>
    <property type="match status" value="1"/>
</dbReference>
<dbReference type="Pfam" id="PF09296">
    <property type="entry name" value="NUDIX-like"/>
    <property type="match status" value="1"/>
</dbReference>
<dbReference type="Pfam" id="PF09297">
    <property type="entry name" value="Zn_ribbon_NUD"/>
    <property type="match status" value="1"/>
</dbReference>
<dbReference type="SUPFAM" id="SSF55811">
    <property type="entry name" value="Nudix"/>
    <property type="match status" value="2"/>
</dbReference>
<dbReference type="PROSITE" id="PS51462">
    <property type="entry name" value="NUDIX"/>
    <property type="match status" value="1"/>
</dbReference>
<gene>
    <name evidence="1" type="primary">nudC</name>
    <name type="ordered locus">PSEEN2184</name>
</gene>
<comment type="function">
    <text evidence="1">mRNA decapping enzyme that specifically removes the nicotinamide adenine dinucleotide (NAD) cap from a subset of mRNAs by hydrolyzing the diphosphate linkage to produce nicotinamide mononucleotide (NMN) and 5' monophosphate mRNA. The NAD-cap is present at the 5'-end of some mRNAs and stabilizes RNA against 5'-processing. Has preference for mRNAs with a 5'-end purine. Catalyzes the hydrolysis of a broad range of dinucleotide pyrophosphates.</text>
</comment>
<comment type="catalytic activity">
    <reaction evidence="1">
        <text>a 5'-end NAD(+)-phospho-ribonucleoside in mRNA + H2O = a 5'-end phospho-adenosine-phospho-ribonucleoside in mRNA + beta-nicotinamide D-ribonucleotide + 2 H(+)</text>
        <dbReference type="Rhea" id="RHEA:60876"/>
        <dbReference type="Rhea" id="RHEA-COMP:15698"/>
        <dbReference type="Rhea" id="RHEA-COMP:15719"/>
        <dbReference type="ChEBI" id="CHEBI:14649"/>
        <dbReference type="ChEBI" id="CHEBI:15377"/>
        <dbReference type="ChEBI" id="CHEBI:15378"/>
        <dbReference type="ChEBI" id="CHEBI:144029"/>
        <dbReference type="ChEBI" id="CHEBI:144051"/>
    </reaction>
    <physiologicalReaction direction="left-to-right" evidence="1">
        <dbReference type="Rhea" id="RHEA:60877"/>
    </physiologicalReaction>
</comment>
<comment type="catalytic activity">
    <reaction evidence="1">
        <text>NAD(+) + H2O = beta-nicotinamide D-ribonucleotide + AMP + 2 H(+)</text>
        <dbReference type="Rhea" id="RHEA:11800"/>
        <dbReference type="ChEBI" id="CHEBI:14649"/>
        <dbReference type="ChEBI" id="CHEBI:15377"/>
        <dbReference type="ChEBI" id="CHEBI:15378"/>
        <dbReference type="ChEBI" id="CHEBI:57540"/>
        <dbReference type="ChEBI" id="CHEBI:456215"/>
        <dbReference type="EC" id="3.6.1.22"/>
    </reaction>
</comment>
<comment type="catalytic activity">
    <reaction evidence="1">
        <text>NADH + H2O = reduced beta-nicotinamide D-ribonucleotide + AMP + 2 H(+)</text>
        <dbReference type="Rhea" id="RHEA:48868"/>
        <dbReference type="ChEBI" id="CHEBI:15377"/>
        <dbReference type="ChEBI" id="CHEBI:15378"/>
        <dbReference type="ChEBI" id="CHEBI:57945"/>
        <dbReference type="ChEBI" id="CHEBI:90832"/>
        <dbReference type="ChEBI" id="CHEBI:456215"/>
        <dbReference type="EC" id="3.6.1.22"/>
    </reaction>
</comment>
<comment type="cofactor">
    <cofactor evidence="1">
        <name>Mg(2+)</name>
        <dbReference type="ChEBI" id="CHEBI:18420"/>
    </cofactor>
    <cofactor evidence="1">
        <name>Mn(2+)</name>
        <dbReference type="ChEBI" id="CHEBI:29035"/>
    </cofactor>
    <text evidence="1">Divalent metal cations. Mg(2+) or Mn(2+).</text>
</comment>
<comment type="cofactor">
    <cofactor evidence="1">
        <name>Zn(2+)</name>
        <dbReference type="ChEBI" id="CHEBI:29105"/>
    </cofactor>
    <text evidence="1">Binds 1 zinc ion per subunit.</text>
</comment>
<comment type="subunit">
    <text evidence="1">Homodimer.</text>
</comment>
<comment type="similarity">
    <text evidence="1">Belongs to the Nudix hydrolase family. NudC subfamily.</text>
</comment>
<protein>
    <recommendedName>
        <fullName evidence="1">NAD-capped RNA hydrolase NudC</fullName>
        <shortName evidence="1">DeNADding enzyme NudC</shortName>
        <ecNumber evidence="1">3.6.1.-</ecNumber>
    </recommendedName>
    <alternativeName>
        <fullName evidence="1">NADH pyrophosphatase</fullName>
        <ecNumber evidence="1">3.6.1.22</ecNumber>
    </alternativeName>
</protein>
<feature type="chain" id="PRO_1000021913" description="NAD-capped RNA hydrolase NudC">
    <location>
        <begin position="1"/>
        <end position="276"/>
    </location>
</feature>
<feature type="domain" description="Nudix hydrolase" evidence="1">
    <location>
        <begin position="139"/>
        <end position="262"/>
    </location>
</feature>
<feature type="short sequence motif" description="Nudix box" evidence="1">
    <location>
        <begin position="173"/>
        <end position="194"/>
    </location>
</feature>
<feature type="binding site" evidence="1">
    <location>
        <position position="82"/>
    </location>
    <ligand>
        <name>substrate</name>
    </ligand>
</feature>
<feature type="binding site" evidence="1">
    <location>
        <position position="112"/>
    </location>
    <ligand>
        <name>Zn(2+)</name>
        <dbReference type="ChEBI" id="CHEBI:29105"/>
    </ligand>
</feature>
<feature type="binding site" evidence="1">
    <location>
        <position position="115"/>
    </location>
    <ligand>
        <name>Zn(2+)</name>
        <dbReference type="ChEBI" id="CHEBI:29105"/>
    </ligand>
</feature>
<feature type="binding site" evidence="1">
    <location>
        <position position="125"/>
    </location>
    <ligand>
        <name>substrate</name>
    </ligand>
</feature>
<feature type="binding site" evidence="1">
    <location>
        <position position="130"/>
    </location>
    <ligand>
        <name>Zn(2+)</name>
        <dbReference type="ChEBI" id="CHEBI:29105"/>
    </ligand>
</feature>
<feature type="binding site" evidence="1">
    <location>
        <position position="133"/>
    </location>
    <ligand>
        <name>Zn(2+)</name>
        <dbReference type="ChEBI" id="CHEBI:29105"/>
    </ligand>
</feature>
<feature type="binding site" evidence="1">
    <location>
        <position position="138"/>
    </location>
    <ligand>
        <name>substrate</name>
    </ligand>
</feature>
<feature type="binding site" evidence="1">
    <location>
        <position position="172"/>
    </location>
    <ligand>
        <name>a divalent metal cation</name>
        <dbReference type="ChEBI" id="CHEBI:60240"/>
        <label>1</label>
    </ligand>
</feature>
<feature type="binding site" evidence="1">
    <location>
        <position position="188"/>
    </location>
    <ligand>
        <name>a divalent metal cation</name>
        <dbReference type="ChEBI" id="CHEBI:60240"/>
        <label>2</label>
    </ligand>
</feature>
<feature type="binding site" evidence="1">
    <location>
        <position position="188"/>
    </location>
    <ligand>
        <name>a divalent metal cation</name>
        <dbReference type="ChEBI" id="CHEBI:60240"/>
        <label>3</label>
    </ligand>
</feature>
<feature type="binding site" evidence="1">
    <location>
        <position position="192"/>
    </location>
    <ligand>
        <name>a divalent metal cation</name>
        <dbReference type="ChEBI" id="CHEBI:60240"/>
        <label>1</label>
    </ligand>
</feature>
<feature type="binding site" evidence="1">
    <location>
        <position position="192"/>
    </location>
    <ligand>
        <name>a divalent metal cation</name>
        <dbReference type="ChEBI" id="CHEBI:60240"/>
        <label>3</label>
    </ligand>
</feature>
<feature type="binding site" evidence="1">
    <location>
        <begin position="206"/>
        <end position="213"/>
    </location>
    <ligand>
        <name>substrate</name>
    </ligand>
</feature>
<feature type="binding site" evidence="1">
    <location>
        <position position="233"/>
    </location>
    <ligand>
        <name>a divalent metal cation</name>
        <dbReference type="ChEBI" id="CHEBI:60240"/>
        <label>1</label>
    </ligand>
</feature>
<feature type="binding site" evidence="1">
    <location>
        <position position="233"/>
    </location>
    <ligand>
        <name>a divalent metal cation</name>
        <dbReference type="ChEBI" id="CHEBI:60240"/>
        <label>3</label>
    </ligand>
</feature>
<feature type="binding site" evidence="1">
    <location>
        <position position="255"/>
    </location>
    <ligand>
        <name>substrate</name>
    </ligand>
</feature>
<keyword id="KW-0378">Hydrolase</keyword>
<keyword id="KW-0460">Magnesium</keyword>
<keyword id="KW-0464">Manganese</keyword>
<keyword id="KW-0479">Metal-binding</keyword>
<keyword id="KW-0520">NAD</keyword>
<keyword id="KW-0862">Zinc</keyword>
<name>NUDC_PSEE4</name>